<dbReference type="EMBL" id="D10945">
    <property type="protein sequence ID" value="BAA01739.1"/>
    <property type="molecule type" value="mRNA"/>
</dbReference>
<dbReference type="EMBL" id="S58720">
    <property type="protein sequence ID" value="AAC60743.1"/>
    <property type="molecule type" value="mRNA"/>
</dbReference>
<dbReference type="SMR" id="Q07662"/>
<dbReference type="GO" id="GO:0005615">
    <property type="term" value="C:extracellular space"/>
    <property type="evidence" value="ECO:0007669"/>
    <property type="project" value="TreeGrafter"/>
</dbReference>
<dbReference type="GO" id="GO:0030141">
    <property type="term" value="C:secretory granule"/>
    <property type="evidence" value="ECO:0007669"/>
    <property type="project" value="TreeGrafter"/>
</dbReference>
<dbReference type="GO" id="GO:0005185">
    <property type="term" value="F:neurohypophyseal hormone activity"/>
    <property type="evidence" value="ECO:0007669"/>
    <property type="project" value="InterPro"/>
</dbReference>
<dbReference type="FunFam" id="2.60.9.10:FF:000001">
    <property type="entry name" value="oxytocin-neurophysin 1"/>
    <property type="match status" value="1"/>
</dbReference>
<dbReference type="Gene3D" id="2.60.9.10">
    <property type="entry name" value="Neurohypophysial hormone domain"/>
    <property type="match status" value="1"/>
</dbReference>
<dbReference type="InterPro" id="IPR000981">
    <property type="entry name" value="Neurhyp_horm"/>
</dbReference>
<dbReference type="InterPro" id="IPR036387">
    <property type="entry name" value="Neurhyp_horm_dom_sf"/>
</dbReference>
<dbReference type="InterPro" id="IPR022423">
    <property type="entry name" value="Neurohypophysial_hormone_CS"/>
</dbReference>
<dbReference type="PANTHER" id="PTHR11681">
    <property type="entry name" value="NEUROPHYSIN"/>
    <property type="match status" value="1"/>
</dbReference>
<dbReference type="PANTHER" id="PTHR11681:SF13">
    <property type="entry name" value="VASOPRESSIN-NEUROPHYSIN 2-COPEPTIN PRECURSOR"/>
    <property type="match status" value="1"/>
</dbReference>
<dbReference type="Pfam" id="PF00220">
    <property type="entry name" value="Hormone_4"/>
    <property type="match status" value="1"/>
</dbReference>
<dbReference type="Pfam" id="PF00184">
    <property type="entry name" value="Hormone_5"/>
    <property type="match status" value="1"/>
</dbReference>
<dbReference type="PIRSF" id="PIRSF001815">
    <property type="entry name" value="Nonapeptide_hormone_precursor"/>
    <property type="match status" value="1"/>
</dbReference>
<dbReference type="PRINTS" id="PR00831">
    <property type="entry name" value="NEUROPHYSIN"/>
</dbReference>
<dbReference type="SMART" id="SM00003">
    <property type="entry name" value="NH"/>
    <property type="match status" value="1"/>
</dbReference>
<dbReference type="SUPFAM" id="SSF49606">
    <property type="entry name" value="Neurophysin II"/>
    <property type="match status" value="1"/>
</dbReference>
<dbReference type="PROSITE" id="PS00264">
    <property type="entry name" value="NEUROHYPOPHYS_HORM"/>
    <property type="match status" value="1"/>
</dbReference>
<keyword id="KW-0027">Amidation</keyword>
<keyword id="KW-0165">Cleavage on pair of basic residues</keyword>
<keyword id="KW-1015">Disulfide bond</keyword>
<keyword id="KW-0372">Hormone</keyword>
<keyword id="KW-0964">Secreted</keyword>
<keyword id="KW-0732">Signal</keyword>
<comment type="function">
    <text>Vasotocin is probably an antidiuretic hormone.</text>
</comment>
<comment type="subcellular location">
    <subcellularLocation>
        <location>Secreted</location>
    </subcellularLocation>
</comment>
<comment type="PTM">
    <text evidence="1">Seven disulfide bonds are present in neurophysin.</text>
</comment>
<comment type="similarity">
    <text evidence="3">Belongs to the vasopressin/oxytocin family.</text>
</comment>
<proteinExistence type="evidence at protein level"/>
<evidence type="ECO:0000250" key="1"/>
<evidence type="ECO:0000250" key="2">
    <source>
        <dbReference type="UniProtKB" id="P01175"/>
    </source>
</evidence>
<evidence type="ECO:0000305" key="3"/>
<feature type="signal peptide" evidence="1">
    <location>
        <begin position="1"/>
        <end position="20"/>
    </location>
</feature>
<feature type="peptide" id="PRO_0000020566" description="Vasotocin">
    <location>
        <begin position="21"/>
        <end position="29"/>
    </location>
</feature>
<feature type="chain" id="PRO_0000020567" description="Neurophysin VT 1">
    <location>
        <begin position="33"/>
        <end position="155"/>
    </location>
</feature>
<feature type="modified residue" description="Glycine amide" evidence="1">
    <location>
        <position position="29"/>
    </location>
</feature>
<feature type="disulfide bond">
    <location>
        <begin position="21"/>
        <end position="26"/>
    </location>
</feature>
<feature type="disulfide bond" evidence="2">
    <location>
        <begin position="41"/>
        <end position="85"/>
    </location>
</feature>
<feature type="disulfide bond" evidence="2">
    <location>
        <begin position="44"/>
        <end position="58"/>
    </location>
</feature>
<feature type="disulfide bond" evidence="2">
    <location>
        <begin position="52"/>
        <end position="75"/>
    </location>
</feature>
<feature type="disulfide bond" evidence="2">
    <location>
        <begin position="59"/>
        <end position="65"/>
    </location>
</feature>
<feature type="disulfide bond" evidence="2">
    <location>
        <begin position="92"/>
        <end position="105"/>
    </location>
</feature>
<feature type="disulfide bond" evidence="2">
    <location>
        <begin position="99"/>
        <end position="117"/>
    </location>
</feature>
<feature type="disulfide bond" evidence="2">
    <location>
        <begin position="106"/>
        <end position="111"/>
    </location>
</feature>
<protein>
    <recommendedName>
        <fullName>Vasotocin-neurophysin VT 1</fullName>
    </recommendedName>
    <component>
        <recommendedName>
            <fullName>Vasotocin</fullName>
            <shortName>VT</shortName>
        </recommendedName>
    </component>
    <component>
        <recommendedName>
            <fullName>Neurophysin VT 1</fullName>
        </recommendedName>
    </component>
</protein>
<accession>Q07662</accession>
<organism>
    <name type="scientific">Oncorhynchus masou</name>
    <name type="common">Cherry salmon</name>
    <name type="synonym">Masu salmon</name>
    <dbReference type="NCBI Taxonomy" id="8020"/>
    <lineage>
        <taxon>Eukaryota</taxon>
        <taxon>Metazoa</taxon>
        <taxon>Chordata</taxon>
        <taxon>Craniata</taxon>
        <taxon>Vertebrata</taxon>
        <taxon>Euteleostomi</taxon>
        <taxon>Actinopterygii</taxon>
        <taxon>Neopterygii</taxon>
        <taxon>Teleostei</taxon>
        <taxon>Protacanthopterygii</taxon>
        <taxon>Salmoniformes</taxon>
        <taxon>Salmonidae</taxon>
        <taxon>Salmoninae</taxon>
        <taxon>Oncorhynchus</taxon>
    </lineage>
</organism>
<name>NEU3_ONCMA</name>
<sequence>MPDSTIPLLCVLGLLALSSACYIQNCPRGGKRSFPDLKRPCMSCGPGNRGLCFGPSICCGEGMGCYMGSPEAASCVEENYLTSPCEVGGRVCGSEEGHCAAPGVCCDAESCLLDSDCLDDSKRQPPSEQYSSLMEGLAGDLLQWMLHATRRERPQ</sequence>
<reference key="1">
    <citation type="journal article" date="1992" name="Zool. Sci.">
        <title>Cloning and sequence analyses of vasotocin and isotocin precursor cDNAs in the masu salmon, Oncorhynchus masou: evolution of neurohypophysial hormone precursors.</title>
        <authorList>
            <person name="Suzuki M."/>
            <person name="Hyodo S."/>
            <person name="Urano A."/>
        </authorList>
    </citation>
    <scope>NUCLEOTIDE SEQUENCE [MRNA]</scope>
    <source>
        <tissue>Hypothalamus</tissue>
    </source>
</reference>